<keyword id="KW-0963">Cytoplasm</keyword>
<keyword id="KW-0229">DNA integration</keyword>
<keyword id="KW-0233">DNA recombination</keyword>
<keyword id="KW-0238">DNA-binding</keyword>
<comment type="function">
    <text evidence="1">Putative tyrosine recombinase. Not involved in the cutting and rejoining of the recombining DNA molecules on dif(SL) site.</text>
</comment>
<comment type="subcellular location">
    <subcellularLocation>
        <location evidence="1">Cytoplasm</location>
    </subcellularLocation>
</comment>
<comment type="similarity">
    <text evidence="1">Belongs to the 'phage' integrase family. XerD-like subfamily.</text>
</comment>
<reference key="1">
    <citation type="journal article" date="2006" name="Proc. Natl. Acad. Sci. U.S.A.">
        <title>Molecular genetic anatomy of inter- and intraserotype variation in the human bacterial pathogen group A Streptococcus.</title>
        <authorList>
            <person name="Beres S.B."/>
            <person name="Richter E.W."/>
            <person name="Nagiec M.J."/>
            <person name="Sumby P."/>
            <person name="Porcella S.F."/>
            <person name="DeLeo F.R."/>
            <person name="Musser J.M."/>
        </authorList>
    </citation>
    <scope>NUCLEOTIDE SEQUENCE [LARGE SCALE GENOMIC DNA]</scope>
    <source>
        <strain>MGAS10270</strain>
    </source>
</reference>
<evidence type="ECO:0000255" key="1">
    <source>
        <dbReference type="HAMAP-Rule" id="MF_01817"/>
    </source>
</evidence>
<evidence type="ECO:0000255" key="2">
    <source>
        <dbReference type="PROSITE-ProRule" id="PRU01246"/>
    </source>
</evidence>
<evidence type="ECO:0000255" key="3">
    <source>
        <dbReference type="PROSITE-ProRule" id="PRU01248"/>
    </source>
</evidence>
<sequence>MKSYIEPFIASKALSQNSQKAYRYDLQQFCQLVGERVNQDKLLLYQNSIANLSLSAKKRKLSTANQFLYYLYQIKYLNSYFRLTDTMKVMRTEKQQAAIINTDIFYQKTPFVWGQLISLLILELGLTPSEVAGIEVANLDLSFQMLTLKTKKGVRVLPLSQILIPFLEQQLIGKEVYLFEHRGIPFSRQWFFNHLKTFVRSIGYEGLTAQKLREQFILKEKLAGKSIIELSDILGLKSPVTLEKYYKS</sequence>
<proteinExistence type="inferred from homology"/>
<name>XERDL_STRPD</name>
<accession>Q1JIF6</accession>
<protein>
    <recommendedName>
        <fullName evidence="1">Tyrosine recombinase XerD-like</fullName>
    </recommendedName>
</protein>
<organism>
    <name type="scientific">Streptococcus pyogenes serotype M2 (strain MGAS10270)</name>
    <dbReference type="NCBI Taxonomy" id="370552"/>
    <lineage>
        <taxon>Bacteria</taxon>
        <taxon>Bacillati</taxon>
        <taxon>Bacillota</taxon>
        <taxon>Bacilli</taxon>
        <taxon>Lactobacillales</taxon>
        <taxon>Streptococcaceae</taxon>
        <taxon>Streptococcus</taxon>
    </lineage>
</organism>
<feature type="chain" id="PRO_1000070257" description="Tyrosine recombinase XerD-like">
    <location>
        <begin position="1"/>
        <end position="248"/>
    </location>
</feature>
<feature type="domain" description="Core-binding (CB)" evidence="3">
    <location>
        <begin position="1"/>
        <end position="72"/>
    </location>
</feature>
<feature type="domain" description="Tyr recombinase" evidence="2">
    <location>
        <begin position="85"/>
        <end position="248"/>
    </location>
</feature>
<feature type="active site" evidence="2">
    <location>
        <position position="149"/>
    </location>
</feature>
<feature type="active site" evidence="2">
    <location>
        <position position="213"/>
    </location>
</feature>
<feature type="active site" description="O-(3'-phospho-DNA)-tyrosine intermediate" evidence="2">
    <location>
        <position position="245"/>
    </location>
</feature>
<gene>
    <name type="ordered locus">MGAS10270_Spy0302</name>
</gene>
<dbReference type="EMBL" id="CP000260">
    <property type="protein sequence ID" value="ABF33367.1"/>
    <property type="molecule type" value="Genomic_DNA"/>
</dbReference>
<dbReference type="SMR" id="Q1JIF6"/>
<dbReference type="KEGG" id="sph:MGAS10270_Spy0302"/>
<dbReference type="HOGENOM" id="CLU_1128554_0_0_9"/>
<dbReference type="Proteomes" id="UP000002436">
    <property type="component" value="Chromosome"/>
</dbReference>
<dbReference type="GO" id="GO:0005737">
    <property type="term" value="C:cytoplasm"/>
    <property type="evidence" value="ECO:0007669"/>
    <property type="project" value="UniProtKB-SubCell"/>
</dbReference>
<dbReference type="GO" id="GO:0003677">
    <property type="term" value="F:DNA binding"/>
    <property type="evidence" value="ECO:0007669"/>
    <property type="project" value="UniProtKB-KW"/>
</dbReference>
<dbReference type="GO" id="GO:0009037">
    <property type="term" value="F:tyrosine-based site-specific recombinase activity"/>
    <property type="evidence" value="ECO:0007669"/>
    <property type="project" value="UniProtKB-UniRule"/>
</dbReference>
<dbReference type="GO" id="GO:0006313">
    <property type="term" value="P:DNA transposition"/>
    <property type="evidence" value="ECO:0007669"/>
    <property type="project" value="UniProtKB-UniRule"/>
</dbReference>
<dbReference type="CDD" id="cd01190">
    <property type="entry name" value="INT_StrepXerD_C_like"/>
    <property type="match status" value="1"/>
</dbReference>
<dbReference type="Gene3D" id="1.10.150.130">
    <property type="match status" value="1"/>
</dbReference>
<dbReference type="Gene3D" id="1.10.443.10">
    <property type="entry name" value="Intergrase catalytic core"/>
    <property type="match status" value="1"/>
</dbReference>
<dbReference type="HAMAP" id="MF_01817">
    <property type="entry name" value="Recomb_XerD_like"/>
    <property type="match status" value="1"/>
</dbReference>
<dbReference type="InterPro" id="IPR044068">
    <property type="entry name" value="CB"/>
</dbReference>
<dbReference type="InterPro" id="IPR011010">
    <property type="entry name" value="DNA_brk_join_enz"/>
</dbReference>
<dbReference type="InterPro" id="IPR013762">
    <property type="entry name" value="Integrase-like_cat_sf"/>
</dbReference>
<dbReference type="InterPro" id="IPR002104">
    <property type="entry name" value="Integrase_catalytic"/>
</dbReference>
<dbReference type="InterPro" id="IPR010998">
    <property type="entry name" value="Integrase_recombinase_N"/>
</dbReference>
<dbReference type="InterPro" id="IPR020876">
    <property type="entry name" value="Tyrosine_recombinase_XerD-like"/>
</dbReference>
<dbReference type="NCBIfam" id="NF002685">
    <property type="entry name" value="PRK02436.1"/>
    <property type="match status" value="1"/>
</dbReference>
<dbReference type="SUPFAM" id="SSF56349">
    <property type="entry name" value="DNA breaking-rejoining enzymes"/>
    <property type="match status" value="1"/>
</dbReference>
<dbReference type="PROSITE" id="PS51900">
    <property type="entry name" value="CB"/>
    <property type="match status" value="1"/>
</dbReference>
<dbReference type="PROSITE" id="PS51898">
    <property type="entry name" value="TYR_RECOMBINASE"/>
    <property type="match status" value="1"/>
</dbReference>